<dbReference type="EMBL" id="CP000127">
    <property type="protein sequence ID" value="ABA58769.1"/>
    <property type="molecule type" value="Genomic_DNA"/>
</dbReference>
<dbReference type="SMR" id="Q3J8S7"/>
<dbReference type="FunCoup" id="Q3J8S7">
    <property type="interactions" value="587"/>
</dbReference>
<dbReference type="STRING" id="323261.Noc_2311"/>
<dbReference type="KEGG" id="noc:Noc_2311"/>
<dbReference type="eggNOG" id="COG0199">
    <property type="taxonomic scope" value="Bacteria"/>
</dbReference>
<dbReference type="HOGENOM" id="CLU_139869_0_1_6"/>
<dbReference type="InParanoid" id="Q3J8S7"/>
<dbReference type="Proteomes" id="UP000006838">
    <property type="component" value="Chromosome"/>
</dbReference>
<dbReference type="GO" id="GO:0005737">
    <property type="term" value="C:cytoplasm"/>
    <property type="evidence" value="ECO:0007669"/>
    <property type="project" value="UniProtKB-ARBA"/>
</dbReference>
<dbReference type="GO" id="GO:0015935">
    <property type="term" value="C:small ribosomal subunit"/>
    <property type="evidence" value="ECO:0007669"/>
    <property type="project" value="TreeGrafter"/>
</dbReference>
<dbReference type="GO" id="GO:0019843">
    <property type="term" value="F:rRNA binding"/>
    <property type="evidence" value="ECO:0007669"/>
    <property type="project" value="UniProtKB-UniRule"/>
</dbReference>
<dbReference type="GO" id="GO:0003735">
    <property type="term" value="F:structural constituent of ribosome"/>
    <property type="evidence" value="ECO:0007669"/>
    <property type="project" value="InterPro"/>
</dbReference>
<dbReference type="GO" id="GO:0006412">
    <property type="term" value="P:translation"/>
    <property type="evidence" value="ECO:0007669"/>
    <property type="project" value="UniProtKB-UniRule"/>
</dbReference>
<dbReference type="FunFam" id="1.10.287.1480:FF:000001">
    <property type="entry name" value="30S ribosomal protein S14"/>
    <property type="match status" value="1"/>
</dbReference>
<dbReference type="Gene3D" id="1.10.287.1480">
    <property type="match status" value="1"/>
</dbReference>
<dbReference type="HAMAP" id="MF_00537">
    <property type="entry name" value="Ribosomal_uS14_1"/>
    <property type="match status" value="1"/>
</dbReference>
<dbReference type="InterPro" id="IPR001209">
    <property type="entry name" value="Ribosomal_uS14"/>
</dbReference>
<dbReference type="InterPro" id="IPR023036">
    <property type="entry name" value="Ribosomal_uS14_bac/plastid"/>
</dbReference>
<dbReference type="InterPro" id="IPR018271">
    <property type="entry name" value="Ribosomal_uS14_CS"/>
</dbReference>
<dbReference type="NCBIfam" id="NF006477">
    <property type="entry name" value="PRK08881.1"/>
    <property type="match status" value="1"/>
</dbReference>
<dbReference type="PANTHER" id="PTHR19836">
    <property type="entry name" value="30S RIBOSOMAL PROTEIN S14"/>
    <property type="match status" value="1"/>
</dbReference>
<dbReference type="PANTHER" id="PTHR19836:SF19">
    <property type="entry name" value="SMALL RIBOSOMAL SUBUNIT PROTEIN US14M"/>
    <property type="match status" value="1"/>
</dbReference>
<dbReference type="Pfam" id="PF00253">
    <property type="entry name" value="Ribosomal_S14"/>
    <property type="match status" value="1"/>
</dbReference>
<dbReference type="SUPFAM" id="SSF57716">
    <property type="entry name" value="Glucocorticoid receptor-like (DNA-binding domain)"/>
    <property type="match status" value="1"/>
</dbReference>
<dbReference type="PROSITE" id="PS00527">
    <property type="entry name" value="RIBOSOMAL_S14"/>
    <property type="match status" value="1"/>
</dbReference>
<name>RS14_NITOC</name>
<keyword id="KW-1185">Reference proteome</keyword>
<keyword id="KW-0687">Ribonucleoprotein</keyword>
<keyword id="KW-0689">Ribosomal protein</keyword>
<keyword id="KW-0694">RNA-binding</keyword>
<keyword id="KW-0699">rRNA-binding</keyword>
<protein>
    <recommendedName>
        <fullName evidence="1">Small ribosomal subunit protein uS14</fullName>
    </recommendedName>
    <alternativeName>
        <fullName evidence="3">30S ribosomal protein S14</fullName>
    </alternativeName>
</protein>
<sequence>MSKKCMINRELKRIRVARKYAARRIELKTQMRDESLSPEERQRVMLKFHSLPRDSSPVRQRRRCRSTGRPRGYIRKFGLSRNRLREVAMRGDVPGLVKASW</sequence>
<evidence type="ECO:0000255" key="1">
    <source>
        <dbReference type="HAMAP-Rule" id="MF_00537"/>
    </source>
</evidence>
<evidence type="ECO:0000256" key="2">
    <source>
        <dbReference type="SAM" id="MobiDB-lite"/>
    </source>
</evidence>
<evidence type="ECO:0000305" key="3"/>
<feature type="chain" id="PRO_1000128468" description="Small ribosomal subunit protein uS14">
    <location>
        <begin position="1"/>
        <end position="101"/>
    </location>
</feature>
<feature type="region of interest" description="Disordered" evidence="2">
    <location>
        <begin position="52"/>
        <end position="72"/>
    </location>
</feature>
<feature type="compositionally biased region" description="Basic residues" evidence="2">
    <location>
        <begin position="59"/>
        <end position="72"/>
    </location>
</feature>
<accession>Q3J8S7</accession>
<comment type="function">
    <text evidence="1">Binds 16S rRNA, required for the assembly of 30S particles and may also be responsible for determining the conformation of the 16S rRNA at the A site.</text>
</comment>
<comment type="subunit">
    <text evidence="1">Part of the 30S ribosomal subunit. Contacts proteins S3 and S10.</text>
</comment>
<comment type="similarity">
    <text evidence="1">Belongs to the universal ribosomal protein uS14 family.</text>
</comment>
<proteinExistence type="inferred from homology"/>
<gene>
    <name evidence="1" type="primary">rpsN</name>
    <name type="ordered locus">Noc_2311</name>
</gene>
<organism>
    <name type="scientific">Nitrosococcus oceani (strain ATCC 19707 / BCRC 17464 / JCM 30415 / NCIMB 11848 / C-107)</name>
    <dbReference type="NCBI Taxonomy" id="323261"/>
    <lineage>
        <taxon>Bacteria</taxon>
        <taxon>Pseudomonadati</taxon>
        <taxon>Pseudomonadota</taxon>
        <taxon>Gammaproteobacteria</taxon>
        <taxon>Chromatiales</taxon>
        <taxon>Chromatiaceae</taxon>
        <taxon>Nitrosococcus</taxon>
    </lineage>
</organism>
<reference key="1">
    <citation type="journal article" date="2006" name="Appl. Environ. Microbiol.">
        <title>Complete genome sequence of the marine, chemolithoautotrophic, ammonia-oxidizing bacterium Nitrosococcus oceani ATCC 19707.</title>
        <authorList>
            <person name="Klotz M.G."/>
            <person name="Arp D.J."/>
            <person name="Chain P.S.G."/>
            <person name="El-Sheikh A.F."/>
            <person name="Hauser L.J."/>
            <person name="Hommes N.G."/>
            <person name="Larimer F.W."/>
            <person name="Malfatti S.A."/>
            <person name="Norton J.M."/>
            <person name="Poret-Peterson A.T."/>
            <person name="Vergez L.M."/>
            <person name="Ward B.B."/>
        </authorList>
    </citation>
    <scope>NUCLEOTIDE SEQUENCE [LARGE SCALE GENOMIC DNA]</scope>
    <source>
        <strain>ATCC 19707 / BCRC 17464 / JCM 30415 / NCIMB 11848 / C-107</strain>
    </source>
</reference>